<name>GRPE_BURCJ</name>
<gene>
    <name evidence="1" type="primary">grpE</name>
    <name type="ordered locus">BceJ2315_32120</name>
    <name type="ORF">BCAL3272</name>
</gene>
<evidence type="ECO:0000255" key="1">
    <source>
        <dbReference type="HAMAP-Rule" id="MF_01151"/>
    </source>
</evidence>
<evidence type="ECO:0000256" key="2">
    <source>
        <dbReference type="SAM" id="MobiDB-lite"/>
    </source>
</evidence>
<accession>B4EDZ4</accession>
<dbReference type="EMBL" id="AM747720">
    <property type="protein sequence ID" value="CAR53596.1"/>
    <property type="molecule type" value="Genomic_DNA"/>
</dbReference>
<dbReference type="RefSeq" id="WP_006484988.1">
    <property type="nucleotide sequence ID" value="NC_011000.1"/>
</dbReference>
<dbReference type="SMR" id="B4EDZ4"/>
<dbReference type="GeneID" id="56557187"/>
<dbReference type="KEGG" id="bcj:BCAL3272"/>
<dbReference type="eggNOG" id="COG0576">
    <property type="taxonomic scope" value="Bacteria"/>
</dbReference>
<dbReference type="HOGENOM" id="CLU_057217_6_1_4"/>
<dbReference type="BioCyc" id="BCEN216591:G1G1V-3643-MONOMER"/>
<dbReference type="Proteomes" id="UP000001035">
    <property type="component" value="Chromosome 1"/>
</dbReference>
<dbReference type="GO" id="GO:0005829">
    <property type="term" value="C:cytosol"/>
    <property type="evidence" value="ECO:0007669"/>
    <property type="project" value="TreeGrafter"/>
</dbReference>
<dbReference type="GO" id="GO:0000774">
    <property type="term" value="F:adenyl-nucleotide exchange factor activity"/>
    <property type="evidence" value="ECO:0007669"/>
    <property type="project" value="InterPro"/>
</dbReference>
<dbReference type="GO" id="GO:0042803">
    <property type="term" value="F:protein homodimerization activity"/>
    <property type="evidence" value="ECO:0007669"/>
    <property type="project" value="InterPro"/>
</dbReference>
<dbReference type="GO" id="GO:0051087">
    <property type="term" value="F:protein-folding chaperone binding"/>
    <property type="evidence" value="ECO:0007669"/>
    <property type="project" value="InterPro"/>
</dbReference>
<dbReference type="GO" id="GO:0051082">
    <property type="term" value="F:unfolded protein binding"/>
    <property type="evidence" value="ECO:0007669"/>
    <property type="project" value="TreeGrafter"/>
</dbReference>
<dbReference type="GO" id="GO:0006457">
    <property type="term" value="P:protein folding"/>
    <property type="evidence" value="ECO:0007669"/>
    <property type="project" value="InterPro"/>
</dbReference>
<dbReference type="CDD" id="cd00446">
    <property type="entry name" value="GrpE"/>
    <property type="match status" value="1"/>
</dbReference>
<dbReference type="FunFam" id="2.30.22.10:FF:000001">
    <property type="entry name" value="Protein GrpE"/>
    <property type="match status" value="1"/>
</dbReference>
<dbReference type="Gene3D" id="3.90.20.20">
    <property type="match status" value="1"/>
</dbReference>
<dbReference type="Gene3D" id="2.30.22.10">
    <property type="entry name" value="Head domain of nucleotide exchange factor GrpE"/>
    <property type="match status" value="1"/>
</dbReference>
<dbReference type="HAMAP" id="MF_01151">
    <property type="entry name" value="GrpE"/>
    <property type="match status" value="1"/>
</dbReference>
<dbReference type="InterPro" id="IPR000740">
    <property type="entry name" value="GrpE"/>
</dbReference>
<dbReference type="InterPro" id="IPR013805">
    <property type="entry name" value="GrpE_coiled_coil"/>
</dbReference>
<dbReference type="InterPro" id="IPR009012">
    <property type="entry name" value="GrpE_head"/>
</dbReference>
<dbReference type="NCBIfam" id="NF010737">
    <property type="entry name" value="PRK14139.1"/>
    <property type="match status" value="1"/>
</dbReference>
<dbReference type="NCBIfam" id="NF010738">
    <property type="entry name" value="PRK14140.1"/>
    <property type="match status" value="1"/>
</dbReference>
<dbReference type="NCBIfam" id="NF010748">
    <property type="entry name" value="PRK14150.1"/>
    <property type="match status" value="1"/>
</dbReference>
<dbReference type="PANTHER" id="PTHR21237">
    <property type="entry name" value="GRPE PROTEIN"/>
    <property type="match status" value="1"/>
</dbReference>
<dbReference type="PANTHER" id="PTHR21237:SF23">
    <property type="entry name" value="GRPE PROTEIN HOMOLOG, MITOCHONDRIAL"/>
    <property type="match status" value="1"/>
</dbReference>
<dbReference type="Pfam" id="PF01025">
    <property type="entry name" value="GrpE"/>
    <property type="match status" value="1"/>
</dbReference>
<dbReference type="PRINTS" id="PR00773">
    <property type="entry name" value="GRPEPROTEIN"/>
</dbReference>
<dbReference type="SUPFAM" id="SSF58014">
    <property type="entry name" value="Coiled-coil domain of nucleotide exchange factor GrpE"/>
    <property type="match status" value="1"/>
</dbReference>
<dbReference type="SUPFAM" id="SSF51064">
    <property type="entry name" value="Head domain of nucleotide exchange factor GrpE"/>
    <property type="match status" value="1"/>
</dbReference>
<dbReference type="PROSITE" id="PS01071">
    <property type="entry name" value="GRPE"/>
    <property type="match status" value="1"/>
</dbReference>
<protein>
    <recommendedName>
        <fullName evidence="1">Protein GrpE</fullName>
    </recommendedName>
    <alternativeName>
        <fullName evidence="1">HSP-70 cofactor</fullName>
    </alternativeName>
</protein>
<proteinExistence type="inferred from homology"/>
<comment type="function">
    <text evidence="1">Participates actively in the response to hyperosmotic and heat shock by preventing the aggregation of stress-denatured proteins, in association with DnaK and GrpE. It is the nucleotide exchange factor for DnaK and may function as a thermosensor. Unfolded proteins bind initially to DnaJ; upon interaction with the DnaJ-bound protein, DnaK hydrolyzes its bound ATP, resulting in the formation of a stable complex. GrpE releases ADP from DnaK; ATP binding to DnaK triggers the release of the substrate protein, thus completing the reaction cycle. Several rounds of ATP-dependent interactions between DnaJ, DnaK and GrpE are required for fully efficient folding.</text>
</comment>
<comment type="subunit">
    <text evidence="1">Homodimer.</text>
</comment>
<comment type="subcellular location">
    <subcellularLocation>
        <location evidence="1">Cytoplasm</location>
    </subcellularLocation>
</comment>
<comment type="similarity">
    <text evidence="1">Belongs to the GrpE family.</text>
</comment>
<feature type="chain" id="PRO_1000137548" description="Protein GrpE">
    <location>
        <begin position="1"/>
        <end position="181"/>
    </location>
</feature>
<feature type="region of interest" description="Disordered" evidence="2">
    <location>
        <begin position="1"/>
        <end position="33"/>
    </location>
</feature>
<feature type="compositionally biased region" description="Polar residues" evidence="2">
    <location>
        <begin position="1"/>
        <end position="10"/>
    </location>
</feature>
<feature type="compositionally biased region" description="Low complexity" evidence="2">
    <location>
        <begin position="21"/>
        <end position="33"/>
    </location>
</feature>
<organism>
    <name type="scientific">Burkholderia cenocepacia (strain ATCC BAA-245 / DSM 16553 / LMG 16656 / NCTC 13227 / J2315 / CF5610)</name>
    <name type="common">Burkholderia cepacia (strain J2315)</name>
    <dbReference type="NCBI Taxonomy" id="216591"/>
    <lineage>
        <taxon>Bacteria</taxon>
        <taxon>Pseudomonadati</taxon>
        <taxon>Pseudomonadota</taxon>
        <taxon>Betaproteobacteria</taxon>
        <taxon>Burkholderiales</taxon>
        <taxon>Burkholderiaceae</taxon>
        <taxon>Burkholderia</taxon>
        <taxon>Burkholderia cepacia complex</taxon>
    </lineage>
</organism>
<sequence length="181" mass="19361">MENTQENPATPSAEDIGSEKQAAQGAAPAAEAADAALAEAQAKVAELQESFLRAKAETENVRRRAQDDVSKAHKFAIESFAEHLLPVLDSLEAAVSDTSGDIAKVREGVELTLRQLTSALEKGRVVAINPVGEKFDPHQHQAISMVPAEQEPNTVVTVLQKGYMIADRVLRPALVTVAQSK</sequence>
<keyword id="KW-0143">Chaperone</keyword>
<keyword id="KW-0963">Cytoplasm</keyword>
<keyword id="KW-0346">Stress response</keyword>
<reference key="1">
    <citation type="journal article" date="2009" name="J. Bacteriol.">
        <title>The genome of Burkholderia cenocepacia J2315, an epidemic pathogen of cystic fibrosis patients.</title>
        <authorList>
            <person name="Holden M.T."/>
            <person name="Seth-Smith H.M."/>
            <person name="Crossman L.C."/>
            <person name="Sebaihia M."/>
            <person name="Bentley S.D."/>
            <person name="Cerdeno-Tarraga A.M."/>
            <person name="Thomson N.R."/>
            <person name="Bason N."/>
            <person name="Quail M.A."/>
            <person name="Sharp S."/>
            <person name="Cherevach I."/>
            <person name="Churcher C."/>
            <person name="Goodhead I."/>
            <person name="Hauser H."/>
            <person name="Holroyd N."/>
            <person name="Mungall K."/>
            <person name="Scott P."/>
            <person name="Walker D."/>
            <person name="White B."/>
            <person name="Rose H."/>
            <person name="Iversen P."/>
            <person name="Mil-Homens D."/>
            <person name="Rocha E.P."/>
            <person name="Fialho A.M."/>
            <person name="Baldwin A."/>
            <person name="Dowson C."/>
            <person name="Barrell B.G."/>
            <person name="Govan J.R."/>
            <person name="Vandamme P."/>
            <person name="Hart C.A."/>
            <person name="Mahenthiralingam E."/>
            <person name="Parkhill J."/>
        </authorList>
    </citation>
    <scope>NUCLEOTIDE SEQUENCE [LARGE SCALE GENOMIC DNA]</scope>
    <source>
        <strain>ATCC BAA-245 / DSM 16553 / LMG 16656 / NCTC 13227 / J2315 / CF5610</strain>
    </source>
</reference>